<comment type="function">
    <text evidence="1">Involved in the catabolism of oxalate and in the adapatation to low pH via the induction of the oxalate-dependent acid tolerance response (ATR). Catalyzes the transfer of the CoA moiety from formyl-CoA to oxalate (By similarity).</text>
</comment>
<comment type="catalytic activity">
    <reaction evidence="2">
        <text>formyl-CoA + oxalate = oxalyl-CoA + formate</text>
        <dbReference type="Rhea" id="RHEA:16545"/>
        <dbReference type="ChEBI" id="CHEBI:15740"/>
        <dbReference type="ChEBI" id="CHEBI:30623"/>
        <dbReference type="ChEBI" id="CHEBI:57376"/>
        <dbReference type="ChEBI" id="CHEBI:57388"/>
        <dbReference type="EC" id="2.8.3.16"/>
    </reaction>
</comment>
<comment type="pathway">
    <text evidence="2">Metabolic intermediate degradation; oxalate degradation; CO(2) and formate from oxalate: step 1/2.</text>
</comment>
<comment type="subunit">
    <text evidence="2">Homodimer.</text>
</comment>
<comment type="similarity">
    <text evidence="2">Belongs to the CoA-transferase III family. Frc subfamily.</text>
</comment>
<organism>
    <name type="scientific">Streptomyces coelicolor (strain ATCC BAA-471 / A3(2) / M145)</name>
    <dbReference type="NCBI Taxonomy" id="100226"/>
    <lineage>
        <taxon>Bacteria</taxon>
        <taxon>Bacillati</taxon>
        <taxon>Actinomycetota</taxon>
        <taxon>Actinomycetes</taxon>
        <taxon>Kitasatosporales</taxon>
        <taxon>Streptomycetaceae</taxon>
        <taxon>Streptomyces</taxon>
        <taxon>Streptomyces albidoflavus group</taxon>
    </lineage>
</organism>
<evidence type="ECO:0000250" key="1"/>
<evidence type="ECO:0000255" key="2">
    <source>
        <dbReference type="HAMAP-Rule" id="MF_00742"/>
    </source>
</evidence>
<evidence type="ECO:0000256" key="3">
    <source>
        <dbReference type="SAM" id="MobiDB-lite"/>
    </source>
</evidence>
<protein>
    <recommendedName>
        <fullName>Formyl-CoA:oxalate CoA-transferase</fullName>
        <shortName>FCOCT</shortName>
        <ecNumber evidence="2">2.8.3.16</ecNumber>
    </recommendedName>
    <alternativeName>
        <fullName evidence="2">Formyl-coenzyme A transferase</fullName>
        <shortName evidence="2">Formyl-CoA transferase</shortName>
    </alternativeName>
</protein>
<sequence length="410" mass="44664">MTAKALEGIRVLDMTHVQSGPSATQLLAWLGADVVKLEAPHGDITRGQLRDLPDVDSLYFTMLNCNKRSITLNTKSERGKEILTELIRRSDVMVENFGPGAVDRMGFTWDRVKEINPRIVYASIKGFGEGPYTAFKAYEVVAQAMGGSMSTTGFEDGPPLATGAQIGDSGTGVHVVAGILAALYQREHTGRGQRVNVAMQHAVLNLCRVKLRDQQRLSHGPLAEYPNEDFGDEVPRSGNASGGGQPGWAVKCAPGGPNDYVYVIVQPVGWQPLSELIGRPELAEDPEWATPRARLPKLNKMFQLIEEWSSTLPKWEVLERLNAHNIPCGPILSTKEIIEDDSLVANEMVVTVPHPERGEFVTVGSPLKLSDSPVEVTSSPLLGEHNEEVYVGELGLGDEELRLLKSSGVI</sequence>
<proteinExistence type="inferred from homology"/>
<gene>
    <name evidence="2" type="primary">frc</name>
    <name type="ordered locus">SCO6583</name>
    <name type="ORF">SC8A6.04c</name>
</gene>
<keyword id="KW-1185">Reference proteome</keyword>
<keyword id="KW-0808">Transferase</keyword>
<dbReference type="EC" id="2.8.3.16" evidence="2"/>
<dbReference type="EMBL" id="AL939128">
    <property type="protein sequence ID" value="CAA19776.1"/>
    <property type="molecule type" value="Genomic_DNA"/>
</dbReference>
<dbReference type="PIR" id="T35771">
    <property type="entry name" value="T35771"/>
</dbReference>
<dbReference type="RefSeq" id="NP_630662.1">
    <property type="nucleotide sequence ID" value="NC_003888.3"/>
</dbReference>
<dbReference type="RefSeq" id="WP_003972395.1">
    <property type="nucleotide sequence ID" value="NZ_VNID01000002.1"/>
</dbReference>
<dbReference type="SMR" id="O87838"/>
<dbReference type="STRING" id="100226.gene:17764240"/>
<dbReference type="PaxDb" id="100226-SCO6583"/>
<dbReference type="GeneID" id="91382518"/>
<dbReference type="KEGG" id="sco:SCO6583"/>
<dbReference type="PATRIC" id="fig|100226.15.peg.6688"/>
<dbReference type="eggNOG" id="COG1804">
    <property type="taxonomic scope" value="Bacteria"/>
</dbReference>
<dbReference type="HOGENOM" id="CLU_033975_2_1_11"/>
<dbReference type="InParanoid" id="O87838"/>
<dbReference type="OrthoDB" id="9797653at2"/>
<dbReference type="PhylomeDB" id="O87838"/>
<dbReference type="BRENDA" id="2.8.3.16">
    <property type="organism ID" value="5998"/>
</dbReference>
<dbReference type="UniPathway" id="UPA00540">
    <property type="reaction ID" value="UER00598"/>
</dbReference>
<dbReference type="Proteomes" id="UP000001973">
    <property type="component" value="Chromosome"/>
</dbReference>
<dbReference type="GO" id="GO:0008410">
    <property type="term" value="F:CoA-transferase activity"/>
    <property type="evidence" value="ECO:0000318"/>
    <property type="project" value="GO_Central"/>
</dbReference>
<dbReference type="GO" id="GO:0033608">
    <property type="term" value="F:formyl-CoA transferase activity"/>
    <property type="evidence" value="ECO:0007669"/>
    <property type="project" value="UniProtKB-EC"/>
</dbReference>
<dbReference type="GO" id="GO:0033611">
    <property type="term" value="P:oxalate catabolic process"/>
    <property type="evidence" value="ECO:0007669"/>
    <property type="project" value="UniProtKB-UniRule"/>
</dbReference>
<dbReference type="Gene3D" id="3.40.50.10540">
    <property type="entry name" value="Crotonobetainyl-coa:carnitine coa-transferase, domain 1"/>
    <property type="match status" value="1"/>
</dbReference>
<dbReference type="Gene3D" id="3.30.1540.10">
    <property type="entry name" value="formyl-coa transferase, domain 3"/>
    <property type="match status" value="1"/>
</dbReference>
<dbReference type="HAMAP" id="MF_00742">
    <property type="entry name" value="Formyl_CoA_transfer"/>
    <property type="match status" value="1"/>
</dbReference>
<dbReference type="InterPro" id="IPR050483">
    <property type="entry name" value="CoA-transferase_III_domain"/>
</dbReference>
<dbReference type="InterPro" id="IPR003673">
    <property type="entry name" value="CoA-Trfase_fam_III"/>
</dbReference>
<dbReference type="InterPro" id="IPR044855">
    <property type="entry name" value="CoA-Trfase_III_dom3_sf"/>
</dbReference>
<dbReference type="InterPro" id="IPR023606">
    <property type="entry name" value="CoA-Trfase_III_dom_1_sf"/>
</dbReference>
<dbReference type="InterPro" id="IPR017659">
    <property type="entry name" value="Formyl_CoA_transfer"/>
</dbReference>
<dbReference type="NCBIfam" id="TIGR03253">
    <property type="entry name" value="oxalate_frc"/>
    <property type="match status" value="1"/>
</dbReference>
<dbReference type="NCBIfam" id="NF003809">
    <property type="entry name" value="PRK05398.1"/>
    <property type="match status" value="1"/>
</dbReference>
<dbReference type="PANTHER" id="PTHR48207">
    <property type="entry name" value="SUCCINATE--HYDROXYMETHYLGLUTARATE COA-TRANSFERASE"/>
    <property type="match status" value="1"/>
</dbReference>
<dbReference type="PANTHER" id="PTHR48207:SF3">
    <property type="entry name" value="SUCCINATE--HYDROXYMETHYLGLUTARATE COA-TRANSFERASE"/>
    <property type="match status" value="1"/>
</dbReference>
<dbReference type="Pfam" id="PF02515">
    <property type="entry name" value="CoA_transf_3"/>
    <property type="match status" value="1"/>
</dbReference>
<dbReference type="SUPFAM" id="SSF89796">
    <property type="entry name" value="CoA-transferase family III (CaiB/BaiF)"/>
    <property type="match status" value="1"/>
</dbReference>
<name>FCTA_STRCO</name>
<feature type="chain" id="PRO_0000194724" description="Formyl-CoA:oxalate CoA-transferase">
    <location>
        <begin position="1"/>
        <end position="410"/>
    </location>
</feature>
<feature type="region of interest" description="Disordered" evidence="3">
    <location>
        <begin position="221"/>
        <end position="245"/>
    </location>
</feature>
<feature type="active site" description="Nucleophile" evidence="2">
    <location>
        <position position="168"/>
    </location>
</feature>
<feature type="binding site" evidence="1">
    <location>
        <begin position="18"/>
        <end position="19"/>
    </location>
    <ligand>
        <name>CoA</name>
        <dbReference type="ChEBI" id="CHEBI:57287"/>
    </ligand>
</feature>
<feature type="binding site" evidence="1">
    <location>
        <begin position="72"/>
        <end position="75"/>
    </location>
    <ligand>
        <name>CoA</name>
        <dbReference type="ChEBI" id="CHEBI:57287"/>
    </ligand>
</feature>
<feature type="binding site" evidence="1">
    <location>
        <begin position="96"/>
        <end position="98"/>
    </location>
    <ligand>
        <name>CoA</name>
        <dbReference type="ChEBI" id="CHEBI:57287"/>
    </ligand>
</feature>
<feature type="binding site" evidence="2">
    <location>
        <position position="104"/>
    </location>
    <ligand>
        <name>CoA</name>
        <dbReference type="ChEBI" id="CHEBI:57287"/>
    </ligand>
</feature>
<feature type="binding site" evidence="1">
    <location>
        <begin position="136"/>
        <end position="139"/>
    </location>
    <ligand>
        <name>CoA</name>
        <dbReference type="ChEBI" id="CHEBI:57287"/>
    </ligand>
</feature>
<feature type="binding site" evidence="1">
    <location>
        <begin position="243"/>
        <end position="245"/>
    </location>
    <ligand>
        <name>substrate</name>
    </ligand>
</feature>
<accession>O87838</accession>
<reference key="1">
    <citation type="journal article" date="2002" name="Nature">
        <title>Complete genome sequence of the model actinomycete Streptomyces coelicolor A3(2).</title>
        <authorList>
            <person name="Bentley S.D."/>
            <person name="Chater K.F."/>
            <person name="Cerdeno-Tarraga A.-M."/>
            <person name="Challis G.L."/>
            <person name="Thomson N.R."/>
            <person name="James K.D."/>
            <person name="Harris D.E."/>
            <person name="Quail M.A."/>
            <person name="Kieser H."/>
            <person name="Harper D."/>
            <person name="Bateman A."/>
            <person name="Brown S."/>
            <person name="Chandra G."/>
            <person name="Chen C.W."/>
            <person name="Collins M."/>
            <person name="Cronin A."/>
            <person name="Fraser A."/>
            <person name="Goble A."/>
            <person name="Hidalgo J."/>
            <person name="Hornsby T."/>
            <person name="Howarth S."/>
            <person name="Huang C.-H."/>
            <person name="Kieser T."/>
            <person name="Larke L."/>
            <person name="Murphy L.D."/>
            <person name="Oliver K."/>
            <person name="O'Neil S."/>
            <person name="Rabbinowitsch E."/>
            <person name="Rajandream M.A."/>
            <person name="Rutherford K.M."/>
            <person name="Rutter S."/>
            <person name="Seeger K."/>
            <person name="Saunders D."/>
            <person name="Sharp S."/>
            <person name="Squares R."/>
            <person name="Squares S."/>
            <person name="Taylor K."/>
            <person name="Warren T."/>
            <person name="Wietzorrek A."/>
            <person name="Woodward J.R."/>
            <person name="Barrell B.G."/>
            <person name="Parkhill J."/>
            <person name="Hopwood D.A."/>
        </authorList>
    </citation>
    <scope>NUCLEOTIDE SEQUENCE [LARGE SCALE GENOMIC DNA]</scope>
    <source>
        <strain>ATCC BAA-471 / A3(2) / M145</strain>
    </source>
</reference>